<feature type="chain" id="PRO_1000116158" description="Aspartate carbamoyltransferase catalytic subunit">
    <location>
        <begin position="1"/>
        <end position="311"/>
    </location>
</feature>
<feature type="binding site" evidence="1">
    <location>
        <position position="59"/>
    </location>
    <ligand>
        <name>carbamoyl phosphate</name>
        <dbReference type="ChEBI" id="CHEBI:58228"/>
    </ligand>
</feature>
<feature type="binding site" evidence="1">
    <location>
        <position position="60"/>
    </location>
    <ligand>
        <name>carbamoyl phosphate</name>
        <dbReference type="ChEBI" id="CHEBI:58228"/>
    </ligand>
</feature>
<feature type="binding site" evidence="1">
    <location>
        <position position="87"/>
    </location>
    <ligand>
        <name>L-aspartate</name>
        <dbReference type="ChEBI" id="CHEBI:29991"/>
    </ligand>
</feature>
<feature type="binding site" evidence="1">
    <location>
        <position position="109"/>
    </location>
    <ligand>
        <name>carbamoyl phosphate</name>
        <dbReference type="ChEBI" id="CHEBI:58228"/>
    </ligand>
</feature>
<feature type="binding site" evidence="1">
    <location>
        <position position="139"/>
    </location>
    <ligand>
        <name>carbamoyl phosphate</name>
        <dbReference type="ChEBI" id="CHEBI:58228"/>
    </ligand>
</feature>
<feature type="binding site" evidence="1">
    <location>
        <position position="142"/>
    </location>
    <ligand>
        <name>carbamoyl phosphate</name>
        <dbReference type="ChEBI" id="CHEBI:58228"/>
    </ligand>
</feature>
<feature type="binding site" evidence="1">
    <location>
        <position position="172"/>
    </location>
    <ligand>
        <name>L-aspartate</name>
        <dbReference type="ChEBI" id="CHEBI:29991"/>
    </ligand>
</feature>
<feature type="binding site" evidence="1">
    <location>
        <position position="224"/>
    </location>
    <ligand>
        <name>L-aspartate</name>
        <dbReference type="ChEBI" id="CHEBI:29991"/>
    </ligand>
</feature>
<feature type="binding site" evidence="1">
    <location>
        <position position="265"/>
    </location>
    <ligand>
        <name>carbamoyl phosphate</name>
        <dbReference type="ChEBI" id="CHEBI:58228"/>
    </ligand>
</feature>
<feature type="binding site" evidence="1">
    <location>
        <position position="266"/>
    </location>
    <ligand>
        <name>carbamoyl phosphate</name>
        <dbReference type="ChEBI" id="CHEBI:58228"/>
    </ligand>
</feature>
<name>PYRB_STRE4</name>
<keyword id="KW-0665">Pyrimidine biosynthesis</keyword>
<keyword id="KW-0808">Transferase</keyword>
<comment type="function">
    <text evidence="1">Catalyzes the condensation of carbamoyl phosphate and aspartate to form carbamoyl aspartate and inorganic phosphate, the committed step in the de novo pyrimidine nucleotide biosynthesis pathway.</text>
</comment>
<comment type="catalytic activity">
    <reaction evidence="1">
        <text>carbamoyl phosphate + L-aspartate = N-carbamoyl-L-aspartate + phosphate + H(+)</text>
        <dbReference type="Rhea" id="RHEA:20013"/>
        <dbReference type="ChEBI" id="CHEBI:15378"/>
        <dbReference type="ChEBI" id="CHEBI:29991"/>
        <dbReference type="ChEBI" id="CHEBI:32814"/>
        <dbReference type="ChEBI" id="CHEBI:43474"/>
        <dbReference type="ChEBI" id="CHEBI:58228"/>
        <dbReference type="EC" id="2.1.3.2"/>
    </reaction>
</comment>
<comment type="pathway">
    <text evidence="1">Pyrimidine metabolism; UMP biosynthesis via de novo pathway; (S)-dihydroorotate from bicarbonate: step 2/3.</text>
</comment>
<comment type="subunit">
    <text evidence="1">Heterododecamer (2C3:3R2) of six catalytic PyrB chains organized as two trimers (C3), and six regulatory PyrI chains organized as three dimers (R2).</text>
</comment>
<comment type="similarity">
    <text evidence="1">Belongs to the aspartate/ornithine carbamoyltransferase superfamily. ATCase family.</text>
</comment>
<sequence>MSVVNNRVALKHLVSMEHLTNEEVLGLISRGSEYKAGKVAIKDNSRHFAANLFFENSTRTHKSFEVAENKLGLRVLDFNADTSAVNKGETLYDTVLTMSALGTEICVIRHPEDDYYQQLIDSPTITASIVNGGDGSGQHPSQCLLDLLTIYEEFGHFDGLKIAIAGDLTHSRVAKSNMQILKRLGAELYFYGPEQWYSSEFDSYGRYMAIDHIIDQLDVLMLLRVQHERHDGSQSFSKEDYHRQFGLTEERYRRLKDSAIIMHPAPVNRDVEIADHLVEAPKARIVAQMANGVFVRMAIIEAILNGRNDKV</sequence>
<accession>C0M758</accession>
<organism>
    <name type="scientific">Streptococcus equi subsp. equi (strain 4047)</name>
    <dbReference type="NCBI Taxonomy" id="553482"/>
    <lineage>
        <taxon>Bacteria</taxon>
        <taxon>Bacillati</taxon>
        <taxon>Bacillota</taxon>
        <taxon>Bacilli</taxon>
        <taxon>Lactobacillales</taxon>
        <taxon>Streptococcaceae</taxon>
        <taxon>Streptococcus</taxon>
    </lineage>
</organism>
<evidence type="ECO:0000255" key="1">
    <source>
        <dbReference type="HAMAP-Rule" id="MF_00001"/>
    </source>
</evidence>
<dbReference type="EC" id="2.1.3.2" evidence="1"/>
<dbReference type="EMBL" id="FM204883">
    <property type="protein sequence ID" value="CAW94100.1"/>
    <property type="molecule type" value="Genomic_DNA"/>
</dbReference>
<dbReference type="RefSeq" id="WP_012679666.1">
    <property type="nucleotide sequence ID" value="NC_012471.1"/>
</dbReference>
<dbReference type="SMR" id="C0M758"/>
<dbReference type="KEGG" id="seu:SEQ_1315"/>
<dbReference type="HOGENOM" id="CLU_043846_2_1_9"/>
<dbReference type="OrthoDB" id="9774690at2"/>
<dbReference type="UniPathway" id="UPA00070">
    <property type="reaction ID" value="UER00116"/>
</dbReference>
<dbReference type="Proteomes" id="UP000001365">
    <property type="component" value="Chromosome"/>
</dbReference>
<dbReference type="GO" id="GO:0005829">
    <property type="term" value="C:cytosol"/>
    <property type="evidence" value="ECO:0007669"/>
    <property type="project" value="TreeGrafter"/>
</dbReference>
<dbReference type="GO" id="GO:0016597">
    <property type="term" value="F:amino acid binding"/>
    <property type="evidence" value="ECO:0007669"/>
    <property type="project" value="InterPro"/>
</dbReference>
<dbReference type="GO" id="GO:0004070">
    <property type="term" value="F:aspartate carbamoyltransferase activity"/>
    <property type="evidence" value="ECO:0007669"/>
    <property type="project" value="UniProtKB-UniRule"/>
</dbReference>
<dbReference type="GO" id="GO:0006207">
    <property type="term" value="P:'de novo' pyrimidine nucleobase biosynthetic process"/>
    <property type="evidence" value="ECO:0007669"/>
    <property type="project" value="InterPro"/>
</dbReference>
<dbReference type="GO" id="GO:0044205">
    <property type="term" value="P:'de novo' UMP biosynthetic process"/>
    <property type="evidence" value="ECO:0007669"/>
    <property type="project" value="UniProtKB-UniRule"/>
</dbReference>
<dbReference type="GO" id="GO:0006520">
    <property type="term" value="P:amino acid metabolic process"/>
    <property type="evidence" value="ECO:0007669"/>
    <property type="project" value="InterPro"/>
</dbReference>
<dbReference type="FunFam" id="3.40.50.1370:FF:000011">
    <property type="entry name" value="Aspartate carbamoyltransferase"/>
    <property type="match status" value="1"/>
</dbReference>
<dbReference type="Gene3D" id="3.40.50.1370">
    <property type="entry name" value="Aspartate/ornithine carbamoyltransferase"/>
    <property type="match status" value="2"/>
</dbReference>
<dbReference type="HAMAP" id="MF_00001">
    <property type="entry name" value="Asp_carb_tr"/>
    <property type="match status" value="1"/>
</dbReference>
<dbReference type="InterPro" id="IPR006132">
    <property type="entry name" value="Asp/Orn_carbamoyltranf_P-bd"/>
</dbReference>
<dbReference type="InterPro" id="IPR006130">
    <property type="entry name" value="Asp/Orn_carbamoylTrfase"/>
</dbReference>
<dbReference type="InterPro" id="IPR036901">
    <property type="entry name" value="Asp/Orn_carbamoylTrfase_sf"/>
</dbReference>
<dbReference type="InterPro" id="IPR002082">
    <property type="entry name" value="Asp_carbamoyltransf"/>
</dbReference>
<dbReference type="InterPro" id="IPR006131">
    <property type="entry name" value="Asp_carbamoyltransf_Asp/Orn-bd"/>
</dbReference>
<dbReference type="NCBIfam" id="TIGR00670">
    <property type="entry name" value="asp_carb_tr"/>
    <property type="match status" value="1"/>
</dbReference>
<dbReference type="NCBIfam" id="NF002032">
    <property type="entry name" value="PRK00856.1"/>
    <property type="match status" value="1"/>
</dbReference>
<dbReference type="PANTHER" id="PTHR45753:SF6">
    <property type="entry name" value="ASPARTATE CARBAMOYLTRANSFERASE"/>
    <property type="match status" value="1"/>
</dbReference>
<dbReference type="PANTHER" id="PTHR45753">
    <property type="entry name" value="ORNITHINE CARBAMOYLTRANSFERASE, MITOCHONDRIAL"/>
    <property type="match status" value="1"/>
</dbReference>
<dbReference type="Pfam" id="PF00185">
    <property type="entry name" value="OTCace"/>
    <property type="match status" value="1"/>
</dbReference>
<dbReference type="Pfam" id="PF02729">
    <property type="entry name" value="OTCace_N"/>
    <property type="match status" value="1"/>
</dbReference>
<dbReference type="PRINTS" id="PR00100">
    <property type="entry name" value="AOTCASE"/>
</dbReference>
<dbReference type="PRINTS" id="PR00101">
    <property type="entry name" value="ATCASE"/>
</dbReference>
<dbReference type="SUPFAM" id="SSF53671">
    <property type="entry name" value="Aspartate/ornithine carbamoyltransferase"/>
    <property type="match status" value="1"/>
</dbReference>
<dbReference type="PROSITE" id="PS00097">
    <property type="entry name" value="CARBAMOYLTRANSFERASE"/>
    <property type="match status" value="1"/>
</dbReference>
<reference key="1">
    <citation type="journal article" date="2009" name="PLoS Pathog.">
        <title>Genomic evidence for the evolution of Streptococcus equi: host restriction, increased virulence, and genetic exchange with human pathogens.</title>
        <authorList>
            <person name="Holden M.T.G."/>
            <person name="Heather Z."/>
            <person name="Paillot R."/>
            <person name="Steward K.F."/>
            <person name="Webb K."/>
            <person name="Ainslie F."/>
            <person name="Jourdan T."/>
            <person name="Bason N.C."/>
            <person name="Holroyd N.E."/>
            <person name="Mungall K."/>
            <person name="Quail M.A."/>
            <person name="Sanders M."/>
            <person name="Simmonds M."/>
            <person name="Willey D."/>
            <person name="Brooks K."/>
            <person name="Aanensen D.M."/>
            <person name="Spratt B.G."/>
            <person name="Jolley K.A."/>
            <person name="Maiden M.C.J."/>
            <person name="Kehoe M."/>
            <person name="Chanter N."/>
            <person name="Bentley S.D."/>
            <person name="Robinson C."/>
            <person name="Maskell D.J."/>
            <person name="Parkhill J."/>
            <person name="Waller A.S."/>
        </authorList>
    </citation>
    <scope>NUCLEOTIDE SEQUENCE [LARGE SCALE GENOMIC DNA]</scope>
    <source>
        <strain>4047</strain>
    </source>
</reference>
<gene>
    <name evidence="1" type="primary">pyrB</name>
    <name type="ordered locus">SEQ_1315</name>
</gene>
<proteinExistence type="inferred from homology"/>
<protein>
    <recommendedName>
        <fullName evidence="1">Aspartate carbamoyltransferase catalytic subunit</fullName>
        <ecNumber evidence="1">2.1.3.2</ecNumber>
    </recommendedName>
    <alternativeName>
        <fullName evidence="1">Aspartate transcarbamylase</fullName>
        <shortName evidence="1">ATCase</shortName>
    </alternativeName>
</protein>